<sequence>MADEALFLLLHNEMVSGVYKSAEQGEVENGRCITKLENMGFRVGQGLIERFTKDTARFKDELDIMKFICKDFWTTVFKKQIDNLRTNHQGIYVLQDNKFRLLTQMSAGKQYLEHASKYLAFTCGLIRGGLSNLGIKSIVTAEVSSMPACKFQVMIQKL</sequence>
<accession>Q32L78</accession>
<proteinExistence type="evidence at transcript level"/>
<gene>
    <name evidence="2" type="primary">TRAPPC6B</name>
</gene>
<dbReference type="EMBL" id="BC109723">
    <property type="protein sequence ID" value="AAI09724.1"/>
    <property type="molecule type" value="mRNA"/>
</dbReference>
<dbReference type="RefSeq" id="NP_001033223.1">
    <property type="nucleotide sequence ID" value="NM_001038134.1"/>
</dbReference>
<dbReference type="SMR" id="Q32L78"/>
<dbReference type="FunCoup" id="Q32L78">
    <property type="interactions" value="2626"/>
</dbReference>
<dbReference type="STRING" id="9913.ENSBTAP00000019999"/>
<dbReference type="PaxDb" id="9913-ENSBTAP00000019999"/>
<dbReference type="Ensembl" id="ENSBTAT00000019999.4">
    <property type="protein sequence ID" value="ENSBTAP00000019999.3"/>
    <property type="gene ID" value="ENSBTAG00000015023.5"/>
</dbReference>
<dbReference type="GeneID" id="521470"/>
<dbReference type="KEGG" id="bta:521470"/>
<dbReference type="CTD" id="122553"/>
<dbReference type="VEuPathDB" id="HostDB:ENSBTAG00000015023"/>
<dbReference type="VGNC" id="VGNC:36293">
    <property type="gene designation" value="TRAPPC6B"/>
</dbReference>
<dbReference type="eggNOG" id="KOG3316">
    <property type="taxonomic scope" value="Eukaryota"/>
</dbReference>
<dbReference type="GeneTree" id="ENSGT00390000012948"/>
<dbReference type="HOGENOM" id="CLU_076409_3_1_1"/>
<dbReference type="InParanoid" id="Q32L78"/>
<dbReference type="OMA" id="CKEFWTA"/>
<dbReference type="OrthoDB" id="941624at2759"/>
<dbReference type="TreeFam" id="TF313010"/>
<dbReference type="Reactome" id="R-BTA-204005">
    <property type="pathway name" value="COPII-mediated vesicle transport"/>
</dbReference>
<dbReference type="Reactome" id="R-BTA-8876198">
    <property type="pathway name" value="RAB GEFs exchange GTP for GDP on RABs"/>
</dbReference>
<dbReference type="Proteomes" id="UP000009136">
    <property type="component" value="Chromosome 21"/>
</dbReference>
<dbReference type="Bgee" id="ENSBTAG00000015023">
    <property type="expression patterns" value="Expressed in occipital lobe and 105 other cell types or tissues"/>
</dbReference>
<dbReference type="GO" id="GO:0005801">
    <property type="term" value="C:cis-Golgi network"/>
    <property type="evidence" value="ECO:0000318"/>
    <property type="project" value="GO_Central"/>
</dbReference>
<dbReference type="GO" id="GO:0005783">
    <property type="term" value="C:endoplasmic reticulum"/>
    <property type="evidence" value="ECO:0007669"/>
    <property type="project" value="UniProtKB-SubCell"/>
</dbReference>
<dbReference type="GO" id="GO:0005802">
    <property type="term" value="C:trans-Golgi network"/>
    <property type="evidence" value="ECO:0000318"/>
    <property type="project" value="GO_Central"/>
</dbReference>
<dbReference type="GO" id="GO:0030008">
    <property type="term" value="C:TRAPP complex"/>
    <property type="evidence" value="ECO:0000318"/>
    <property type="project" value="GO_Central"/>
</dbReference>
<dbReference type="GO" id="GO:0006888">
    <property type="term" value="P:endoplasmic reticulum to Golgi vesicle-mediated transport"/>
    <property type="evidence" value="ECO:0000318"/>
    <property type="project" value="GO_Central"/>
</dbReference>
<dbReference type="GO" id="GO:0007399">
    <property type="term" value="P:nervous system development"/>
    <property type="evidence" value="ECO:0007669"/>
    <property type="project" value="UniProtKB-KW"/>
</dbReference>
<dbReference type="CDD" id="cd14944">
    <property type="entry name" value="TRAPPC6A_Trs33"/>
    <property type="match status" value="1"/>
</dbReference>
<dbReference type="FunFam" id="3.30.1380.20:FF:000004">
    <property type="entry name" value="Trafficking protein particle complex subunit 6B"/>
    <property type="match status" value="1"/>
</dbReference>
<dbReference type="Gene3D" id="3.30.1380.20">
    <property type="entry name" value="Trafficking protein particle complex subunit 3"/>
    <property type="match status" value="1"/>
</dbReference>
<dbReference type="InterPro" id="IPR024096">
    <property type="entry name" value="NO_sig/Golgi_transp_ligand-bd"/>
</dbReference>
<dbReference type="InterPro" id="IPR007194">
    <property type="entry name" value="TRAPP_component"/>
</dbReference>
<dbReference type="InterPro" id="IPR037992">
    <property type="entry name" value="TRAPPC6/Trs33"/>
</dbReference>
<dbReference type="PANTHER" id="PTHR12817">
    <property type="entry name" value="TRAFFICKING PROTEIN PARTICLE COMPLEX SUBUNIT 6B"/>
    <property type="match status" value="1"/>
</dbReference>
<dbReference type="PANTHER" id="PTHR12817:SF3">
    <property type="entry name" value="TRAFFICKING PROTEIN PARTICLE COMPLEX SUBUNIT 6B"/>
    <property type="match status" value="1"/>
</dbReference>
<dbReference type="Pfam" id="PF04051">
    <property type="entry name" value="TRAPP"/>
    <property type="match status" value="1"/>
</dbReference>
<dbReference type="SUPFAM" id="SSF111126">
    <property type="entry name" value="Ligand-binding domain in the NO signalling and Golgi transport"/>
    <property type="match status" value="1"/>
</dbReference>
<evidence type="ECO:0000250" key="1"/>
<evidence type="ECO:0000250" key="2">
    <source>
        <dbReference type="UniProtKB" id="Q86SZ2"/>
    </source>
</evidence>
<evidence type="ECO:0000305" key="3"/>
<name>TPC6B_BOVIN</name>
<reference key="1">
    <citation type="submission" date="2005-11" db="EMBL/GenBank/DDBJ databases">
        <authorList>
            <consortium name="NIH - Mammalian Gene Collection (MGC) project"/>
        </authorList>
    </citation>
    <scope>NUCLEOTIDE SEQUENCE [LARGE SCALE MRNA]</scope>
    <source>
        <strain>Crossbred X Angus</strain>
        <tissue>Liver</tissue>
    </source>
</reference>
<feature type="chain" id="PRO_0000244540" description="Trafficking protein particle complex subunit 6B">
    <location>
        <begin position="1"/>
        <end position="158"/>
    </location>
</feature>
<keyword id="KW-0256">Endoplasmic reticulum</keyword>
<keyword id="KW-0333">Golgi apparatus</keyword>
<keyword id="KW-0524">Neurogenesis</keyword>
<keyword id="KW-1185">Reference proteome</keyword>
<protein>
    <recommendedName>
        <fullName evidence="2">Trafficking protein particle complex subunit 6B</fullName>
        <shortName>TRAPP complex subunit 6B</shortName>
    </recommendedName>
</protein>
<comment type="function">
    <text evidence="2">Component of a transport protein particle (TRAPP) complex that may function in specific stages of inter-organelle traffic (By similarity). Specifically involved in the early development of neural circuitry, likely by controlling the frequency and amplitude of intracellular calcium transients implicated in the regulation of neuron differentiation and survival (By similarity).</text>
</comment>
<comment type="subunit">
    <text evidence="2">Homodimer (By similarity). Part of a TRAPP complex. Heterodimer with TRAPPC3 (By similarity). The heterodimer TRAPPC6B-TRAPPC3 interacts with TRAPPC1 likely providing a core for TRAPP complex formation (By similarity).</text>
</comment>
<comment type="subcellular location">
    <subcellularLocation>
        <location evidence="1">Golgi apparatus</location>
        <location evidence="1">cis-Golgi network</location>
    </subcellularLocation>
    <subcellularLocation>
        <location evidence="1">Endoplasmic reticulum</location>
    </subcellularLocation>
</comment>
<comment type="similarity">
    <text evidence="3">Belongs to the TRAPP small subunits family. BET3 subfamily.</text>
</comment>
<organism>
    <name type="scientific">Bos taurus</name>
    <name type="common">Bovine</name>
    <dbReference type="NCBI Taxonomy" id="9913"/>
    <lineage>
        <taxon>Eukaryota</taxon>
        <taxon>Metazoa</taxon>
        <taxon>Chordata</taxon>
        <taxon>Craniata</taxon>
        <taxon>Vertebrata</taxon>
        <taxon>Euteleostomi</taxon>
        <taxon>Mammalia</taxon>
        <taxon>Eutheria</taxon>
        <taxon>Laurasiatheria</taxon>
        <taxon>Artiodactyla</taxon>
        <taxon>Ruminantia</taxon>
        <taxon>Pecora</taxon>
        <taxon>Bovidae</taxon>
        <taxon>Bovinae</taxon>
        <taxon>Bos</taxon>
    </lineage>
</organism>